<evidence type="ECO:0000255" key="1"/>
<evidence type="ECO:0000269" key="2">
    <source>
    </source>
</evidence>
<evidence type="ECO:0000305" key="3"/>
<gene>
    <name type="primary">UGT2B23</name>
</gene>
<accession>Q9TSL6</accession>
<keyword id="KW-0256">Endoplasmic reticulum</keyword>
<keyword id="KW-0325">Glycoprotein</keyword>
<keyword id="KW-0328">Glycosyltransferase</keyword>
<keyword id="KW-0472">Membrane</keyword>
<keyword id="KW-0492">Microsome</keyword>
<keyword id="KW-1185">Reference proteome</keyword>
<keyword id="KW-0732">Signal</keyword>
<keyword id="KW-0808">Transferase</keyword>
<keyword id="KW-0812">Transmembrane</keyword>
<keyword id="KW-1133">Transmembrane helix</keyword>
<comment type="function">
    <text>UDPGTs are of major importance in the conjugation and subsequent elimination of potentially toxic xenobiotics and endogenous compounds. This isozyme has glucuronidating capacity on 6 steroids and the bile acid, hyodeoxycholic acid. May potentially play an important role in estrogen and androgen catabolism in peripheral steroid target tissues.</text>
</comment>
<comment type="catalytic activity">
    <reaction>
        <text>glucuronate acceptor + UDP-alpha-D-glucuronate = acceptor beta-D-glucuronoside + UDP + H(+)</text>
        <dbReference type="Rhea" id="RHEA:21032"/>
        <dbReference type="ChEBI" id="CHEBI:15378"/>
        <dbReference type="ChEBI" id="CHEBI:58052"/>
        <dbReference type="ChEBI" id="CHEBI:58223"/>
        <dbReference type="ChEBI" id="CHEBI:132367"/>
        <dbReference type="ChEBI" id="CHEBI:132368"/>
        <dbReference type="EC" id="2.4.1.17"/>
    </reaction>
</comment>
<comment type="biophysicochemical properties">
    <kinetics>
        <KM>0.9 uM for androsterone</KM>
        <KM>13.5 uM for 3-alpha-diol</KM>
        <KM>1.6 uM for estriol</KM>
        <KM>5.7 uM for 4-hydroxyestrone</KM>
    </kinetics>
</comment>
<comment type="subcellular location">
    <subcellularLocation>
        <location evidence="3">Microsome membrane</location>
        <topology evidence="3">Single-pass membrane protein</topology>
    </subcellularLocation>
    <subcellularLocation>
        <location evidence="3">Endoplasmic reticulum membrane</location>
        <topology evidence="3">Single-pass membrane protein</topology>
    </subcellularLocation>
</comment>
<comment type="tissue specificity">
    <text evidence="2">Expressed in several tissues, including the prostate, mammary gland, epididymis, testis and ovary.</text>
</comment>
<comment type="similarity">
    <text evidence="3">Belongs to the UDP-glycosyltransferase family.</text>
</comment>
<reference key="1">
    <citation type="journal article" date="1999" name="Endocrinology">
        <title>UGT2B23, a novel uridine diphosphate-glucuronosyltransferase enzyme expressed in steroid target tissues that conjugates androgen and estrogen metabolites.</title>
        <authorList>
            <person name="Barbier O."/>
            <person name="Levesque E."/>
            <person name="Belanger A."/>
            <person name="Hum D.W."/>
        </authorList>
    </citation>
    <scope>NUCLEOTIDE SEQUENCE [MRNA]</scope>
    <scope>CHARACTERIZATION</scope>
    <scope>TISSUE SPECIFICITY</scope>
</reference>
<name>UDB23_MACFA</name>
<protein>
    <recommendedName>
        <fullName>UDP-glucuronosyltransferase 2B23</fullName>
        <shortName>UDPGT 2B23</shortName>
        <ecNumber>2.4.1.17</ecNumber>
    </recommendedName>
</protein>
<proteinExistence type="evidence at protein level"/>
<dbReference type="EC" id="2.4.1.17"/>
<dbReference type="EMBL" id="AF112113">
    <property type="protein sequence ID" value="AAF14353.1"/>
    <property type="molecule type" value="mRNA"/>
</dbReference>
<dbReference type="RefSeq" id="NP_001271768.1">
    <property type="nucleotide sequence ID" value="NM_001284839.1"/>
</dbReference>
<dbReference type="SMR" id="Q9TSL6"/>
<dbReference type="CAZy" id="GT1">
    <property type="family name" value="Glycosyltransferase Family 1"/>
</dbReference>
<dbReference type="GlyCosmos" id="Q9TSL6">
    <property type="glycosylation" value="2 sites, No reported glycans"/>
</dbReference>
<dbReference type="eggNOG" id="KOG1192">
    <property type="taxonomic scope" value="Eukaryota"/>
</dbReference>
<dbReference type="OrthoDB" id="6497089at2759"/>
<dbReference type="Proteomes" id="UP000233100">
    <property type="component" value="Unplaced"/>
</dbReference>
<dbReference type="GO" id="GO:0005789">
    <property type="term" value="C:endoplasmic reticulum membrane"/>
    <property type="evidence" value="ECO:0007669"/>
    <property type="project" value="UniProtKB-SubCell"/>
</dbReference>
<dbReference type="GO" id="GO:0015020">
    <property type="term" value="F:glucuronosyltransferase activity"/>
    <property type="evidence" value="ECO:0007669"/>
    <property type="project" value="UniProtKB-EC"/>
</dbReference>
<dbReference type="CDD" id="cd03784">
    <property type="entry name" value="GT1_Gtf-like"/>
    <property type="match status" value="1"/>
</dbReference>
<dbReference type="FunFam" id="3.40.50.2000:FF:000001">
    <property type="entry name" value="UDP-glucuronosyltransferase"/>
    <property type="match status" value="1"/>
</dbReference>
<dbReference type="FunFam" id="3.40.50.2000:FF:000081">
    <property type="entry name" value="UDP-glucuronosyltransferase 2A2"/>
    <property type="match status" value="1"/>
</dbReference>
<dbReference type="Gene3D" id="3.40.50.2000">
    <property type="entry name" value="Glycogen Phosphorylase B"/>
    <property type="match status" value="2"/>
</dbReference>
<dbReference type="InterPro" id="IPR050271">
    <property type="entry name" value="UDP-glycosyltransferase"/>
</dbReference>
<dbReference type="InterPro" id="IPR002213">
    <property type="entry name" value="UDP_glucos_trans"/>
</dbReference>
<dbReference type="InterPro" id="IPR035595">
    <property type="entry name" value="UDP_glycos_trans_CS"/>
</dbReference>
<dbReference type="PANTHER" id="PTHR48043">
    <property type="entry name" value="EG:EG0003.4 PROTEIN-RELATED"/>
    <property type="match status" value="1"/>
</dbReference>
<dbReference type="PANTHER" id="PTHR48043:SF160">
    <property type="entry name" value="UDP-GLUCURONOSYLTRANSFERASE 2B33"/>
    <property type="match status" value="1"/>
</dbReference>
<dbReference type="Pfam" id="PF00201">
    <property type="entry name" value="UDPGT"/>
    <property type="match status" value="1"/>
</dbReference>
<dbReference type="SUPFAM" id="SSF53756">
    <property type="entry name" value="UDP-Glycosyltransferase/glycogen phosphorylase"/>
    <property type="match status" value="1"/>
</dbReference>
<dbReference type="PROSITE" id="PS00375">
    <property type="entry name" value="UDPGT"/>
    <property type="match status" value="1"/>
</dbReference>
<feature type="signal peptide" evidence="1">
    <location>
        <begin position="1"/>
        <end position="24"/>
    </location>
</feature>
<feature type="chain" id="PRO_0000036045" description="UDP-glucuronosyltransferase 2B23">
    <location>
        <begin position="25"/>
        <end position="529"/>
    </location>
</feature>
<feature type="transmembrane region" description="Helical" evidence="1">
    <location>
        <begin position="494"/>
        <end position="514"/>
    </location>
</feature>
<feature type="glycosylation site" description="N-linked (GlcNAc...) asparagine" evidence="1">
    <location>
        <position position="67"/>
    </location>
</feature>
<feature type="glycosylation site" description="N-linked (GlcNAc...) asparagine" evidence="1">
    <location>
        <position position="68"/>
    </location>
</feature>
<sequence length="529" mass="60957">MSVKWTSVILLIQLSFYFSSGSCGKVLVWAAEYSHWMNMKTILEELVQRGHEVTALASSASILFDPNNSSALKIEVFPTSLPKPEFENIVTQEIKRWIELPKDTFWLYFSQMQEIMWKFGDIFRNFCKDVVSNKKLMKKLQESRFDVVFADPIFPCSELLAELFNIPLVYSLRFTPGYVFEKHCGGFLFPPSYVPVVMSELSDQMTFMERVKNMIYMLYFDFCFQIYDMKKWDQFYTEVLGRHTTLSEIMGKADIWLIRNSWNFQFPHPLLPNVDFIGGLLCKPAKPLPKEMEEFVQSSGENGVVVFTLGSMITNMKEERANVIASALAQIPQKVLWRFDGNKPDTLGVNTRLYKWIPQNDLLGHPKTKAFITHGGANGIYEAIYHGVPMVGIPLFADQPDNIAHMKTRGAAVQLDFDTMSSTDLVNALKTVINDPLYKENVMKLSRIQRDQPVKPLDRAVFWIEFVMRHKGAKHLRPAAHDLTWFQYHSFDVIGFLLACVATVIFIIMKCCLFCFWKFARKGKKGKSD</sequence>
<organism>
    <name type="scientific">Macaca fascicularis</name>
    <name type="common">Crab-eating macaque</name>
    <name type="synonym">Cynomolgus monkey</name>
    <dbReference type="NCBI Taxonomy" id="9541"/>
    <lineage>
        <taxon>Eukaryota</taxon>
        <taxon>Metazoa</taxon>
        <taxon>Chordata</taxon>
        <taxon>Craniata</taxon>
        <taxon>Vertebrata</taxon>
        <taxon>Euteleostomi</taxon>
        <taxon>Mammalia</taxon>
        <taxon>Eutheria</taxon>
        <taxon>Euarchontoglires</taxon>
        <taxon>Primates</taxon>
        <taxon>Haplorrhini</taxon>
        <taxon>Catarrhini</taxon>
        <taxon>Cercopithecidae</taxon>
        <taxon>Cercopithecinae</taxon>
        <taxon>Macaca</taxon>
    </lineage>
</organism>